<proteinExistence type="evidence at protein level"/>
<accession>P68189</accession>
<accession>Q9DD47</accession>
<name>MYG_THUTH</name>
<evidence type="ECO:0000250" key="1"/>
<evidence type="ECO:0000250" key="2">
    <source>
        <dbReference type="UniProtKB" id="P02144"/>
    </source>
</evidence>
<evidence type="ECO:0000250" key="3">
    <source>
        <dbReference type="UniProtKB" id="P02185"/>
    </source>
</evidence>
<evidence type="ECO:0000250" key="4">
    <source>
        <dbReference type="UniProtKB" id="P02189"/>
    </source>
</evidence>
<evidence type="ECO:0000250" key="5">
    <source>
        <dbReference type="UniProtKB" id="P68082"/>
    </source>
</evidence>
<evidence type="ECO:0000255" key="6">
    <source>
        <dbReference type="PROSITE-ProRule" id="PRU00238"/>
    </source>
</evidence>
<evidence type="ECO:0007829" key="7">
    <source>
        <dbReference type="PDB" id="2NRM"/>
    </source>
</evidence>
<dbReference type="EC" id="1.7.-.-" evidence="2"/>
<dbReference type="EC" id="1.11.1.-" evidence="2"/>
<dbReference type="EMBL" id="AF291831">
    <property type="protein sequence ID" value="AAG02105.1"/>
    <property type="molecule type" value="mRNA"/>
</dbReference>
<dbReference type="RefSeq" id="XP_067435133.1">
    <property type="nucleotide sequence ID" value="XM_067579032.1"/>
</dbReference>
<dbReference type="RefSeq" id="XP_067435142.1">
    <property type="nucleotide sequence ID" value="XM_067579041.1"/>
</dbReference>
<dbReference type="PDB" id="2NRM">
    <property type="method" value="X-ray"/>
    <property type="resolution" value="1.09 A"/>
    <property type="chains" value="A=2-147"/>
</dbReference>
<dbReference type="PDBsum" id="2NRM"/>
<dbReference type="SMR" id="P68189"/>
<dbReference type="GeneID" id="137174036"/>
<dbReference type="EvolutionaryTrace" id="P68189"/>
<dbReference type="GO" id="GO:0070062">
    <property type="term" value="C:extracellular exosome"/>
    <property type="evidence" value="ECO:0007669"/>
    <property type="project" value="TreeGrafter"/>
</dbReference>
<dbReference type="GO" id="GO:0016528">
    <property type="term" value="C:sarcoplasm"/>
    <property type="evidence" value="ECO:0000250"/>
    <property type="project" value="UniProtKB"/>
</dbReference>
<dbReference type="GO" id="GO:0020037">
    <property type="term" value="F:heme binding"/>
    <property type="evidence" value="ECO:0007669"/>
    <property type="project" value="InterPro"/>
</dbReference>
<dbReference type="GO" id="GO:0046872">
    <property type="term" value="F:metal ion binding"/>
    <property type="evidence" value="ECO:0007669"/>
    <property type="project" value="UniProtKB-KW"/>
</dbReference>
<dbReference type="GO" id="GO:0098809">
    <property type="term" value="F:nitrite reductase activity"/>
    <property type="evidence" value="ECO:0000250"/>
    <property type="project" value="UniProtKB"/>
</dbReference>
<dbReference type="GO" id="GO:0019825">
    <property type="term" value="F:oxygen binding"/>
    <property type="evidence" value="ECO:0007669"/>
    <property type="project" value="InterPro"/>
</dbReference>
<dbReference type="GO" id="GO:0005344">
    <property type="term" value="F:oxygen carrier activity"/>
    <property type="evidence" value="ECO:0000250"/>
    <property type="project" value="UniProtKB"/>
</dbReference>
<dbReference type="GO" id="GO:0004601">
    <property type="term" value="F:peroxidase activity"/>
    <property type="evidence" value="ECO:0000250"/>
    <property type="project" value="UniProtKB"/>
</dbReference>
<dbReference type="GO" id="GO:0019430">
    <property type="term" value="P:removal of superoxide radicals"/>
    <property type="evidence" value="ECO:0000250"/>
    <property type="project" value="UniProtKB"/>
</dbReference>
<dbReference type="Gene3D" id="6.10.140.2100">
    <property type="match status" value="1"/>
</dbReference>
<dbReference type="Gene3D" id="6.10.140.2110">
    <property type="match status" value="1"/>
</dbReference>
<dbReference type="InterPro" id="IPR000971">
    <property type="entry name" value="Globin"/>
</dbReference>
<dbReference type="InterPro" id="IPR009050">
    <property type="entry name" value="Globin-like_sf"/>
</dbReference>
<dbReference type="InterPro" id="IPR002335">
    <property type="entry name" value="Myoglobin"/>
</dbReference>
<dbReference type="PANTHER" id="PTHR47132">
    <property type="entry name" value="MYOGLOBIN"/>
    <property type="match status" value="1"/>
</dbReference>
<dbReference type="PANTHER" id="PTHR47132:SF1">
    <property type="entry name" value="MYOGLOBIN"/>
    <property type="match status" value="1"/>
</dbReference>
<dbReference type="Pfam" id="PF00042">
    <property type="entry name" value="Globin"/>
    <property type="match status" value="1"/>
</dbReference>
<dbReference type="PRINTS" id="PR00613">
    <property type="entry name" value="MYOGLOBIN"/>
</dbReference>
<dbReference type="SUPFAM" id="SSF46458">
    <property type="entry name" value="Globin-like"/>
    <property type="match status" value="1"/>
</dbReference>
<dbReference type="PROSITE" id="PS01033">
    <property type="entry name" value="GLOBIN"/>
    <property type="match status" value="1"/>
</dbReference>
<protein>
    <recommendedName>
        <fullName>Myoglobin</fullName>
    </recommendedName>
    <alternativeName>
        <fullName evidence="2">Nitrite reductase MB</fullName>
        <ecNumber evidence="2">1.7.-.-</ecNumber>
    </alternativeName>
    <alternativeName>
        <fullName evidence="2">Pseudoperoxidase MB</fullName>
        <ecNumber evidence="2">1.11.1.-</ecNumber>
    </alternativeName>
</protein>
<reference key="1">
    <citation type="journal article" date="2001" name="Am. J. Physiol.">
        <title>Oxygen affinity and amino acid sequence of myoglobins from endothermic and ectothermic fish.</title>
        <authorList>
            <person name="Marcinek D.J."/>
            <person name="Bonaventura J."/>
            <person name="Wittenberg J.B."/>
            <person name="Block B.A."/>
        </authorList>
    </citation>
    <scope>NUCLEOTIDE SEQUENCE [MRNA]</scope>
    <source>
        <tissue>Skeletal muscle</tissue>
    </source>
</reference>
<keyword id="KW-0002">3D-structure</keyword>
<keyword id="KW-0963">Cytoplasm</keyword>
<keyword id="KW-0349">Heme</keyword>
<keyword id="KW-0408">Iron</keyword>
<keyword id="KW-0479">Metal-binding</keyword>
<keyword id="KW-0514">Muscle protein</keyword>
<keyword id="KW-0560">Oxidoreductase</keyword>
<keyword id="KW-0561">Oxygen transport</keyword>
<keyword id="KW-0813">Transport</keyword>
<organism>
    <name type="scientific">Thunnus thynnus</name>
    <name type="common">Atlantic bluefin tuna</name>
    <name type="synonym">Scomber thynnus</name>
    <dbReference type="NCBI Taxonomy" id="8237"/>
    <lineage>
        <taxon>Eukaryota</taxon>
        <taxon>Metazoa</taxon>
        <taxon>Chordata</taxon>
        <taxon>Craniata</taxon>
        <taxon>Vertebrata</taxon>
        <taxon>Euteleostomi</taxon>
        <taxon>Actinopterygii</taxon>
        <taxon>Neopterygii</taxon>
        <taxon>Teleostei</taxon>
        <taxon>Neoteleostei</taxon>
        <taxon>Acanthomorphata</taxon>
        <taxon>Pelagiaria</taxon>
        <taxon>Scombriformes</taxon>
        <taxon>Scombridae</taxon>
        <taxon>Thunnus</taxon>
    </lineage>
</organism>
<feature type="initiator methionine" description="Removed" evidence="1">
    <location>
        <position position="1"/>
    </location>
</feature>
<feature type="chain" id="PRO_0000053377" description="Myoglobin">
    <location>
        <begin position="2"/>
        <end position="147"/>
    </location>
</feature>
<feature type="domain" description="Globin" evidence="6">
    <location>
        <begin position="2"/>
        <end position="141"/>
    </location>
</feature>
<feature type="binding site" evidence="5">
    <location>
        <position position="60"/>
    </location>
    <ligand>
        <name>nitrite</name>
        <dbReference type="ChEBI" id="CHEBI:16301"/>
    </ligand>
</feature>
<feature type="binding site" evidence="4 6">
    <location>
        <position position="60"/>
    </location>
    <ligand>
        <name>O2</name>
        <dbReference type="ChEBI" id="CHEBI:15379"/>
    </ligand>
</feature>
<feature type="binding site" description="proximal binding residue" evidence="2">
    <location>
        <position position="89"/>
    </location>
    <ligand>
        <name>heme b</name>
        <dbReference type="ChEBI" id="CHEBI:60344"/>
    </ligand>
    <ligandPart>
        <name>Fe</name>
        <dbReference type="ChEBI" id="CHEBI:18248"/>
    </ligandPart>
</feature>
<feature type="helix" evidence="7">
    <location>
        <begin position="3"/>
        <end position="8"/>
    </location>
</feature>
<feature type="helix" evidence="7">
    <location>
        <begin position="12"/>
        <end position="15"/>
    </location>
</feature>
<feature type="helix" evidence="7">
    <location>
        <begin position="18"/>
        <end position="32"/>
    </location>
</feature>
<feature type="helix" evidence="7">
    <location>
        <begin position="34"/>
        <end position="37"/>
    </location>
</feature>
<feature type="turn" evidence="7">
    <location>
        <begin position="41"/>
        <end position="45"/>
    </location>
</feature>
<feature type="helix" evidence="7">
    <location>
        <begin position="48"/>
        <end position="50"/>
    </location>
</feature>
<feature type="turn" evidence="7">
    <location>
        <begin position="51"/>
        <end position="53"/>
    </location>
</feature>
<feature type="helix" evidence="7">
    <location>
        <begin position="55"/>
        <end position="73"/>
    </location>
</feature>
<feature type="helix" evidence="7">
    <location>
        <begin position="79"/>
        <end position="91"/>
    </location>
</feature>
<feature type="helix" evidence="7">
    <location>
        <begin position="98"/>
        <end position="114"/>
    </location>
</feature>
<feature type="helix" evidence="7">
    <location>
        <begin position="119"/>
        <end position="142"/>
    </location>
</feature>
<comment type="function">
    <text evidence="2">Monomeric heme protein which primary function is to store oxygen and facilitate its diffusion within muscle tissues. Reversibly binds oxygen through a pentacoordinated heme iron and enables its timely and efficient release as needed during periods of heightened demand. Depending on the oxidative conditions of tissues and cells, and in addition to its ability to bind oxygen, it also has a nitrite reductase activity whereby it regulates the production of bioactive nitric oxide. Under stress conditions, like hypoxia and anoxia, it also protects cells against reactive oxygen species thanks to its pseudoperoxidase activity.</text>
</comment>
<comment type="catalytic activity">
    <reaction evidence="2">
        <text>Fe(III)-heme b-[protein] + nitric oxide + H2O = Fe(II)-heme b-[protein] + nitrite + 2 H(+)</text>
        <dbReference type="Rhea" id="RHEA:77711"/>
        <dbReference type="Rhea" id="RHEA-COMP:18975"/>
        <dbReference type="Rhea" id="RHEA-COMP:18976"/>
        <dbReference type="ChEBI" id="CHEBI:15377"/>
        <dbReference type="ChEBI" id="CHEBI:15378"/>
        <dbReference type="ChEBI" id="CHEBI:16301"/>
        <dbReference type="ChEBI" id="CHEBI:16480"/>
        <dbReference type="ChEBI" id="CHEBI:55376"/>
        <dbReference type="ChEBI" id="CHEBI:60344"/>
    </reaction>
    <physiologicalReaction direction="right-to-left" evidence="2">
        <dbReference type="Rhea" id="RHEA:77713"/>
    </physiologicalReaction>
</comment>
<comment type="catalytic activity">
    <reaction evidence="2">
        <text>H2O2 + AH2 = A + 2 H2O</text>
        <dbReference type="Rhea" id="RHEA:30275"/>
        <dbReference type="ChEBI" id="CHEBI:13193"/>
        <dbReference type="ChEBI" id="CHEBI:15377"/>
        <dbReference type="ChEBI" id="CHEBI:16240"/>
        <dbReference type="ChEBI" id="CHEBI:17499"/>
    </reaction>
</comment>
<comment type="subunit">
    <text evidence="3">Monomeric.</text>
</comment>
<comment type="subcellular location">
    <subcellularLocation>
        <location evidence="2">Cytoplasm</location>
        <location evidence="2">Sarcoplasm</location>
    </subcellularLocation>
</comment>
<comment type="similarity">
    <text evidence="6">Belongs to the globin family.</text>
</comment>
<gene>
    <name type="primary">mb</name>
</gene>
<sequence>MADFDAVLKCWGPVEADYTTIGGLVLTRLFKEHPETQKLFPKFAGIAQADIAGNAAVSAHGATVLKKLGELLKAKGSHAAILKPLANSHATKHKIPINNFKLISEVLVKVMHEKAGLDAGGQTALRNVMGIIIADLEANYKELGFSG</sequence>